<comment type="function">
    <text evidence="1">Binds to 23S rRNA. Forms part of two intersubunit bridges in the 70S ribosome.</text>
</comment>
<comment type="subunit">
    <text evidence="1">Part of the 50S ribosomal subunit. Forms a cluster with proteins L3 and L19. In the 70S ribosome, L14 and L19 interact and together make contacts with the 16S rRNA in bridges B5 and B8.</text>
</comment>
<comment type="similarity">
    <text evidence="1">Belongs to the universal ribosomal protein uL14 family.</text>
</comment>
<dbReference type="EMBL" id="CP001393">
    <property type="protein sequence ID" value="ACM60829.1"/>
    <property type="molecule type" value="Genomic_DNA"/>
</dbReference>
<dbReference type="RefSeq" id="WP_013290160.1">
    <property type="nucleotide sequence ID" value="NC_012034.1"/>
</dbReference>
<dbReference type="SMR" id="B9MKH1"/>
<dbReference type="STRING" id="521460.Athe_1735"/>
<dbReference type="GeneID" id="31773092"/>
<dbReference type="KEGG" id="ate:Athe_1735"/>
<dbReference type="eggNOG" id="COG0093">
    <property type="taxonomic scope" value="Bacteria"/>
</dbReference>
<dbReference type="HOGENOM" id="CLU_095071_2_1_9"/>
<dbReference type="Proteomes" id="UP000007723">
    <property type="component" value="Chromosome"/>
</dbReference>
<dbReference type="GO" id="GO:0022625">
    <property type="term" value="C:cytosolic large ribosomal subunit"/>
    <property type="evidence" value="ECO:0007669"/>
    <property type="project" value="TreeGrafter"/>
</dbReference>
<dbReference type="GO" id="GO:0070180">
    <property type="term" value="F:large ribosomal subunit rRNA binding"/>
    <property type="evidence" value="ECO:0007669"/>
    <property type="project" value="TreeGrafter"/>
</dbReference>
<dbReference type="GO" id="GO:0003735">
    <property type="term" value="F:structural constituent of ribosome"/>
    <property type="evidence" value="ECO:0007669"/>
    <property type="project" value="InterPro"/>
</dbReference>
<dbReference type="GO" id="GO:0006412">
    <property type="term" value="P:translation"/>
    <property type="evidence" value="ECO:0007669"/>
    <property type="project" value="UniProtKB-UniRule"/>
</dbReference>
<dbReference type="CDD" id="cd00337">
    <property type="entry name" value="Ribosomal_uL14"/>
    <property type="match status" value="1"/>
</dbReference>
<dbReference type="FunFam" id="2.40.150.20:FF:000001">
    <property type="entry name" value="50S ribosomal protein L14"/>
    <property type="match status" value="1"/>
</dbReference>
<dbReference type="Gene3D" id="2.40.150.20">
    <property type="entry name" value="Ribosomal protein L14"/>
    <property type="match status" value="1"/>
</dbReference>
<dbReference type="HAMAP" id="MF_01367">
    <property type="entry name" value="Ribosomal_uL14"/>
    <property type="match status" value="1"/>
</dbReference>
<dbReference type="InterPro" id="IPR000218">
    <property type="entry name" value="Ribosomal_uL14"/>
</dbReference>
<dbReference type="InterPro" id="IPR005745">
    <property type="entry name" value="Ribosomal_uL14_bac-type"/>
</dbReference>
<dbReference type="InterPro" id="IPR019972">
    <property type="entry name" value="Ribosomal_uL14_CS"/>
</dbReference>
<dbReference type="InterPro" id="IPR036853">
    <property type="entry name" value="Ribosomal_uL14_sf"/>
</dbReference>
<dbReference type="NCBIfam" id="TIGR01067">
    <property type="entry name" value="rplN_bact"/>
    <property type="match status" value="1"/>
</dbReference>
<dbReference type="PANTHER" id="PTHR11761">
    <property type="entry name" value="50S/60S RIBOSOMAL PROTEIN L14/L23"/>
    <property type="match status" value="1"/>
</dbReference>
<dbReference type="PANTHER" id="PTHR11761:SF3">
    <property type="entry name" value="LARGE RIBOSOMAL SUBUNIT PROTEIN UL14M"/>
    <property type="match status" value="1"/>
</dbReference>
<dbReference type="Pfam" id="PF00238">
    <property type="entry name" value="Ribosomal_L14"/>
    <property type="match status" value="1"/>
</dbReference>
<dbReference type="SMART" id="SM01374">
    <property type="entry name" value="Ribosomal_L14"/>
    <property type="match status" value="1"/>
</dbReference>
<dbReference type="SUPFAM" id="SSF50193">
    <property type="entry name" value="Ribosomal protein L14"/>
    <property type="match status" value="1"/>
</dbReference>
<dbReference type="PROSITE" id="PS00049">
    <property type="entry name" value="RIBOSOMAL_L14"/>
    <property type="match status" value="1"/>
</dbReference>
<sequence>MIQPQSRLKVADNTGAKEVMCIRVLGGSNRKFANIGDVIVCSVKDATPGGVVKKGDVVKAVIVRTRKGVRREDGTYIRFDDNAAVLIREDGTPRGTRIFGPVARELRDKDFMKIVSLAPEVL</sequence>
<protein>
    <recommendedName>
        <fullName evidence="1">Large ribosomal subunit protein uL14</fullName>
    </recommendedName>
    <alternativeName>
        <fullName evidence="2">50S ribosomal protein L14</fullName>
    </alternativeName>
</protein>
<name>RL14_CALBD</name>
<evidence type="ECO:0000255" key="1">
    <source>
        <dbReference type="HAMAP-Rule" id="MF_01367"/>
    </source>
</evidence>
<evidence type="ECO:0000305" key="2"/>
<feature type="chain" id="PRO_1000166893" description="Large ribosomal subunit protein uL14">
    <location>
        <begin position="1"/>
        <end position="122"/>
    </location>
</feature>
<organism>
    <name type="scientific">Caldicellulosiruptor bescii (strain ATCC BAA-1888 / DSM 6725 / KCTC 15123 / Z-1320)</name>
    <name type="common">Anaerocellum thermophilum</name>
    <dbReference type="NCBI Taxonomy" id="521460"/>
    <lineage>
        <taxon>Bacteria</taxon>
        <taxon>Bacillati</taxon>
        <taxon>Bacillota</taxon>
        <taxon>Bacillota incertae sedis</taxon>
        <taxon>Caldicellulosiruptorales</taxon>
        <taxon>Caldicellulosiruptoraceae</taxon>
        <taxon>Caldicellulosiruptor</taxon>
    </lineage>
</organism>
<keyword id="KW-0687">Ribonucleoprotein</keyword>
<keyword id="KW-0689">Ribosomal protein</keyword>
<keyword id="KW-0694">RNA-binding</keyword>
<keyword id="KW-0699">rRNA-binding</keyword>
<accession>B9MKH1</accession>
<gene>
    <name evidence="1" type="primary">rplN</name>
    <name type="ordered locus">Athe_1735</name>
</gene>
<reference key="1">
    <citation type="submission" date="2009-01" db="EMBL/GenBank/DDBJ databases">
        <title>Complete sequence of chromosome of Caldicellulosiruptor becscii DSM 6725.</title>
        <authorList>
            <person name="Lucas S."/>
            <person name="Copeland A."/>
            <person name="Lapidus A."/>
            <person name="Glavina del Rio T."/>
            <person name="Tice H."/>
            <person name="Bruce D."/>
            <person name="Goodwin L."/>
            <person name="Pitluck S."/>
            <person name="Sims D."/>
            <person name="Meincke L."/>
            <person name="Brettin T."/>
            <person name="Detter J.C."/>
            <person name="Han C."/>
            <person name="Larimer F."/>
            <person name="Land M."/>
            <person name="Hauser L."/>
            <person name="Kyrpides N."/>
            <person name="Ovchinnikova G."/>
            <person name="Kataeva I."/>
            <person name="Adams M.W.W."/>
        </authorList>
    </citation>
    <scope>NUCLEOTIDE SEQUENCE [LARGE SCALE GENOMIC DNA]</scope>
    <source>
        <strain>ATCC BAA-1888 / DSM 6725 / KCTC 15123 / Z-1320</strain>
    </source>
</reference>
<proteinExistence type="inferred from homology"/>